<sequence>MSAGAITIGLDFGSDSVRALAVDCQSGKELETDVVYYPRWREGKYCQPANNQFRHHPLDYIESLEQAIKVVVSRLTNDQRQSIIGIGVDSTGSTPAPIDEQGQILALRPEFANNPNAMFVLWKDHTAIEEADAINALCRSGQFPDYTRYIGGVYSSEWFWAKILHVSREDAAVRQAAVSWIELCDWVPALLSGTQAPADIRRGRCSAGHKSLWHPSWCGLPPKDFLHALDPCLTETLQYPLFTDTWTAEQPVGSITAEWAQRLGIPETVTLAGGAFDCHVGTVGAGAQPYTLVKVIGTSTCDILIADEERIADRTIAGICGQVDGSVVPNYIGLEAGQSAFGDMYAWFGRLLGWSLQEAAKDHPELKTSLQAMEAKLLERLTHNWAENPTLDHLPIVLDWFNGRRTPFANQRLKGVITDLNLGTDAPTLFGGFIAATAFGARAIMECFEEQGVPVENVLALGGIARKSPVIMQVCTDVMNRPLQIVASDQCCALGAAIFAAVAAGVHGDIPTAQQHMASGIERTLMPDSQRVARYQQLYERYQQWCRLAEPAYSPTSTAKN</sequence>
<evidence type="ECO:0000255" key="1">
    <source>
        <dbReference type="HAMAP-Rule" id="MF_00520"/>
    </source>
</evidence>
<reference key="1">
    <citation type="journal article" date="2004" name="Proc. Natl. Acad. Sci. U.S.A.">
        <title>Genome sequence of the enterobacterial phytopathogen Erwinia carotovora subsp. atroseptica and characterization of virulence factors.</title>
        <authorList>
            <person name="Bell K.S."/>
            <person name="Sebaihia M."/>
            <person name="Pritchard L."/>
            <person name="Holden M.T.G."/>
            <person name="Hyman L.J."/>
            <person name="Holeva M.C."/>
            <person name="Thomson N.R."/>
            <person name="Bentley S.D."/>
            <person name="Churcher L.J.C."/>
            <person name="Mungall K."/>
            <person name="Atkin R."/>
            <person name="Bason N."/>
            <person name="Brooks K."/>
            <person name="Chillingworth T."/>
            <person name="Clark K."/>
            <person name="Doggett J."/>
            <person name="Fraser A."/>
            <person name="Hance Z."/>
            <person name="Hauser H."/>
            <person name="Jagels K."/>
            <person name="Moule S."/>
            <person name="Norbertczak H."/>
            <person name="Ormond D."/>
            <person name="Price C."/>
            <person name="Quail M.A."/>
            <person name="Sanders M."/>
            <person name="Walker D."/>
            <person name="Whitehead S."/>
            <person name="Salmond G.P.C."/>
            <person name="Birch P.R.J."/>
            <person name="Parkhill J."/>
            <person name="Toth I.K."/>
        </authorList>
    </citation>
    <scope>NUCLEOTIDE SEQUENCE [LARGE SCALE GENOMIC DNA]</scope>
    <source>
        <strain>SCRI 1043 / ATCC BAA-672</strain>
    </source>
</reference>
<gene>
    <name evidence="1" type="primary">araB</name>
    <name type="ordered locus">ECA2274</name>
</gene>
<dbReference type="EC" id="2.7.1.16" evidence="1"/>
<dbReference type="EMBL" id="BX950851">
    <property type="protein sequence ID" value="CAG75177.1"/>
    <property type="molecule type" value="Genomic_DNA"/>
</dbReference>
<dbReference type="RefSeq" id="WP_011093832.1">
    <property type="nucleotide sequence ID" value="NC_004547.2"/>
</dbReference>
<dbReference type="SMR" id="Q6D4W6"/>
<dbReference type="STRING" id="218491.ECA2274"/>
<dbReference type="KEGG" id="eca:ECA2274"/>
<dbReference type="PATRIC" id="fig|218491.5.peg.2304"/>
<dbReference type="eggNOG" id="COG1069">
    <property type="taxonomic scope" value="Bacteria"/>
</dbReference>
<dbReference type="HOGENOM" id="CLU_009281_9_1_6"/>
<dbReference type="OrthoDB" id="9805576at2"/>
<dbReference type="UniPathway" id="UPA00145">
    <property type="reaction ID" value="UER00566"/>
</dbReference>
<dbReference type="Proteomes" id="UP000007966">
    <property type="component" value="Chromosome"/>
</dbReference>
<dbReference type="GO" id="GO:0005737">
    <property type="term" value="C:cytoplasm"/>
    <property type="evidence" value="ECO:0007669"/>
    <property type="project" value="TreeGrafter"/>
</dbReference>
<dbReference type="GO" id="GO:0005524">
    <property type="term" value="F:ATP binding"/>
    <property type="evidence" value="ECO:0007669"/>
    <property type="project" value="UniProtKB-KW"/>
</dbReference>
<dbReference type="GO" id="GO:0019150">
    <property type="term" value="F:D-ribulokinase activity"/>
    <property type="evidence" value="ECO:0007669"/>
    <property type="project" value="TreeGrafter"/>
</dbReference>
<dbReference type="GO" id="GO:0008741">
    <property type="term" value="F:ribulokinase activity"/>
    <property type="evidence" value="ECO:0007669"/>
    <property type="project" value="UniProtKB-UniRule"/>
</dbReference>
<dbReference type="GO" id="GO:0019569">
    <property type="term" value="P:L-arabinose catabolic process to xylulose 5-phosphate"/>
    <property type="evidence" value="ECO:0007669"/>
    <property type="project" value="UniProtKB-UniRule"/>
</dbReference>
<dbReference type="CDD" id="cd07781">
    <property type="entry name" value="ASKHA_NBD_FGGY_L-RBK"/>
    <property type="match status" value="1"/>
</dbReference>
<dbReference type="Gene3D" id="1.20.58.2240">
    <property type="match status" value="1"/>
</dbReference>
<dbReference type="Gene3D" id="3.30.420.40">
    <property type="match status" value="1"/>
</dbReference>
<dbReference type="HAMAP" id="MF_00520">
    <property type="entry name" value="Ribulokinase"/>
    <property type="match status" value="1"/>
</dbReference>
<dbReference type="InterPro" id="IPR043129">
    <property type="entry name" value="ATPase_NBD"/>
</dbReference>
<dbReference type="InterPro" id="IPR000577">
    <property type="entry name" value="Carb_kinase_FGGY"/>
</dbReference>
<dbReference type="InterPro" id="IPR018485">
    <property type="entry name" value="FGGY_C"/>
</dbReference>
<dbReference type="InterPro" id="IPR005929">
    <property type="entry name" value="Ribulokinase"/>
</dbReference>
<dbReference type="NCBIfam" id="TIGR01234">
    <property type="entry name" value="L-ribulokinase"/>
    <property type="match status" value="1"/>
</dbReference>
<dbReference type="NCBIfam" id="NF003154">
    <property type="entry name" value="PRK04123.1"/>
    <property type="match status" value="1"/>
</dbReference>
<dbReference type="PANTHER" id="PTHR43435:SF4">
    <property type="entry name" value="FGGY CARBOHYDRATE KINASE DOMAIN-CONTAINING PROTEIN"/>
    <property type="match status" value="1"/>
</dbReference>
<dbReference type="PANTHER" id="PTHR43435">
    <property type="entry name" value="RIBULOKINASE"/>
    <property type="match status" value="1"/>
</dbReference>
<dbReference type="Pfam" id="PF02782">
    <property type="entry name" value="FGGY_C"/>
    <property type="match status" value="1"/>
</dbReference>
<dbReference type="PIRSF" id="PIRSF000538">
    <property type="entry name" value="GlpK"/>
    <property type="match status" value="1"/>
</dbReference>
<dbReference type="SUPFAM" id="SSF53067">
    <property type="entry name" value="Actin-like ATPase domain"/>
    <property type="match status" value="2"/>
</dbReference>
<keyword id="KW-0054">Arabinose catabolism</keyword>
<keyword id="KW-0067">ATP-binding</keyword>
<keyword id="KW-0119">Carbohydrate metabolism</keyword>
<keyword id="KW-0418">Kinase</keyword>
<keyword id="KW-0547">Nucleotide-binding</keyword>
<keyword id="KW-1185">Reference proteome</keyword>
<keyword id="KW-0808">Transferase</keyword>
<protein>
    <recommendedName>
        <fullName evidence="1">Ribulokinase</fullName>
        <ecNumber evidence="1">2.7.1.16</ecNumber>
    </recommendedName>
</protein>
<organism>
    <name type="scientific">Pectobacterium atrosepticum (strain SCRI 1043 / ATCC BAA-672)</name>
    <name type="common">Erwinia carotovora subsp. atroseptica</name>
    <dbReference type="NCBI Taxonomy" id="218491"/>
    <lineage>
        <taxon>Bacteria</taxon>
        <taxon>Pseudomonadati</taxon>
        <taxon>Pseudomonadota</taxon>
        <taxon>Gammaproteobacteria</taxon>
        <taxon>Enterobacterales</taxon>
        <taxon>Pectobacteriaceae</taxon>
        <taxon>Pectobacterium</taxon>
    </lineage>
</organism>
<feature type="chain" id="PRO_0000198361" description="Ribulokinase">
    <location>
        <begin position="1"/>
        <end position="561"/>
    </location>
</feature>
<proteinExistence type="inferred from homology"/>
<accession>Q6D4W6</accession>
<comment type="catalytic activity">
    <reaction evidence="1">
        <text>D-ribulose + ATP = D-ribulose 5-phosphate + ADP + H(+)</text>
        <dbReference type="Rhea" id="RHEA:17601"/>
        <dbReference type="ChEBI" id="CHEBI:15378"/>
        <dbReference type="ChEBI" id="CHEBI:17173"/>
        <dbReference type="ChEBI" id="CHEBI:30616"/>
        <dbReference type="ChEBI" id="CHEBI:58121"/>
        <dbReference type="ChEBI" id="CHEBI:456216"/>
        <dbReference type="EC" id="2.7.1.16"/>
    </reaction>
</comment>
<comment type="catalytic activity">
    <reaction evidence="1">
        <text>L-ribulose + ATP = L-ribulose 5-phosphate + ADP + H(+)</text>
        <dbReference type="Rhea" id="RHEA:22072"/>
        <dbReference type="ChEBI" id="CHEBI:15378"/>
        <dbReference type="ChEBI" id="CHEBI:16880"/>
        <dbReference type="ChEBI" id="CHEBI:30616"/>
        <dbReference type="ChEBI" id="CHEBI:58226"/>
        <dbReference type="ChEBI" id="CHEBI:456216"/>
        <dbReference type="EC" id="2.7.1.16"/>
    </reaction>
</comment>
<comment type="pathway">
    <text evidence="1">Carbohydrate degradation; L-arabinose degradation via L-ribulose; D-xylulose 5-phosphate from L-arabinose (bacterial route): step 2/3.</text>
</comment>
<comment type="similarity">
    <text evidence="1">Belongs to the ribulokinase family.</text>
</comment>
<name>ARAB_PECAS</name>